<evidence type="ECO:0000255" key="1">
    <source>
        <dbReference type="HAMAP-Rule" id="MF_01356"/>
    </source>
</evidence>
<accession>Q3BRN0</accession>
<organism>
    <name type="scientific">Xanthomonas euvesicatoria pv. vesicatoria (strain 85-10)</name>
    <name type="common">Xanthomonas campestris pv. vesicatoria</name>
    <dbReference type="NCBI Taxonomy" id="316273"/>
    <lineage>
        <taxon>Bacteria</taxon>
        <taxon>Pseudomonadati</taxon>
        <taxon>Pseudomonadota</taxon>
        <taxon>Gammaproteobacteria</taxon>
        <taxon>Lysobacterales</taxon>
        <taxon>Lysobacteraceae</taxon>
        <taxon>Xanthomonas</taxon>
    </lineage>
</organism>
<keyword id="KW-0004">4Fe-4S</keyword>
<keyword id="KW-0997">Cell inner membrane</keyword>
<keyword id="KW-1003">Cell membrane</keyword>
<keyword id="KW-0408">Iron</keyword>
<keyword id="KW-0411">Iron-sulfur</keyword>
<keyword id="KW-0472">Membrane</keyword>
<keyword id="KW-0479">Metal-binding</keyword>
<keyword id="KW-0520">NAD</keyword>
<keyword id="KW-0874">Quinone</keyword>
<keyword id="KW-1278">Translocase</keyword>
<keyword id="KW-0813">Transport</keyword>
<keyword id="KW-0830">Ubiquinone</keyword>
<reference key="1">
    <citation type="journal article" date="2005" name="J. Bacteriol.">
        <title>Insights into genome plasticity and pathogenicity of the plant pathogenic Bacterium Xanthomonas campestris pv. vesicatoria revealed by the complete genome sequence.</title>
        <authorList>
            <person name="Thieme F."/>
            <person name="Koebnik R."/>
            <person name="Bekel T."/>
            <person name="Berger C."/>
            <person name="Boch J."/>
            <person name="Buettner D."/>
            <person name="Caldana C."/>
            <person name="Gaigalat L."/>
            <person name="Goesmann A."/>
            <person name="Kay S."/>
            <person name="Kirchner O."/>
            <person name="Lanz C."/>
            <person name="Linke B."/>
            <person name="McHardy A.C."/>
            <person name="Meyer F."/>
            <person name="Mittenhuber G."/>
            <person name="Nies D.H."/>
            <person name="Niesbach-Kloesgen U."/>
            <person name="Patschkowski T."/>
            <person name="Rueckert C."/>
            <person name="Rupp O."/>
            <person name="Schneiker S."/>
            <person name="Schuster S.C."/>
            <person name="Vorhoelter F.J."/>
            <person name="Weber E."/>
            <person name="Puehler A."/>
            <person name="Bonas U."/>
            <person name="Bartels D."/>
            <person name="Kaiser O."/>
        </authorList>
    </citation>
    <scope>NUCLEOTIDE SEQUENCE [LARGE SCALE GENOMIC DNA]</scope>
    <source>
        <strain>85-10</strain>
    </source>
</reference>
<feature type="chain" id="PRO_0000376403" description="NADH-quinone oxidoreductase subunit B">
    <location>
        <begin position="1"/>
        <end position="184"/>
    </location>
</feature>
<feature type="binding site" evidence="1">
    <location>
        <position position="63"/>
    </location>
    <ligand>
        <name>[4Fe-4S] cluster</name>
        <dbReference type="ChEBI" id="CHEBI:49883"/>
    </ligand>
</feature>
<feature type="binding site" evidence="1">
    <location>
        <position position="64"/>
    </location>
    <ligand>
        <name>[4Fe-4S] cluster</name>
        <dbReference type="ChEBI" id="CHEBI:49883"/>
    </ligand>
</feature>
<feature type="binding site" evidence="1">
    <location>
        <position position="128"/>
    </location>
    <ligand>
        <name>[4Fe-4S] cluster</name>
        <dbReference type="ChEBI" id="CHEBI:49883"/>
    </ligand>
</feature>
<feature type="binding site" evidence="1">
    <location>
        <position position="158"/>
    </location>
    <ligand>
        <name>[4Fe-4S] cluster</name>
        <dbReference type="ChEBI" id="CHEBI:49883"/>
    </ligand>
</feature>
<comment type="function">
    <text evidence="1">NDH-1 shuttles electrons from NADH, via FMN and iron-sulfur (Fe-S) centers, to quinones in the respiratory chain. The immediate electron acceptor for the enzyme in this species is believed to be ubiquinone. Couples the redox reaction to proton translocation (for every two electrons transferred, four hydrogen ions are translocated across the cytoplasmic membrane), and thus conserves the redox energy in a proton gradient.</text>
</comment>
<comment type="catalytic activity">
    <reaction evidence="1">
        <text>a quinone + NADH + 5 H(+)(in) = a quinol + NAD(+) + 4 H(+)(out)</text>
        <dbReference type="Rhea" id="RHEA:57888"/>
        <dbReference type="ChEBI" id="CHEBI:15378"/>
        <dbReference type="ChEBI" id="CHEBI:24646"/>
        <dbReference type="ChEBI" id="CHEBI:57540"/>
        <dbReference type="ChEBI" id="CHEBI:57945"/>
        <dbReference type="ChEBI" id="CHEBI:132124"/>
    </reaction>
</comment>
<comment type="cofactor">
    <cofactor evidence="1">
        <name>[4Fe-4S] cluster</name>
        <dbReference type="ChEBI" id="CHEBI:49883"/>
    </cofactor>
    <text evidence="1">Binds 1 [4Fe-4S] cluster.</text>
</comment>
<comment type="subunit">
    <text evidence="1">NDH-1 is composed of 14 different subunits. Subunits NuoB, C, D, E, F, and G constitute the peripheral sector of the complex.</text>
</comment>
<comment type="subcellular location">
    <subcellularLocation>
        <location evidence="1">Cell inner membrane</location>
        <topology evidence="1">Peripheral membrane protein</topology>
        <orientation evidence="1">Cytoplasmic side</orientation>
    </subcellularLocation>
</comment>
<comment type="similarity">
    <text evidence="1">Belongs to the complex I 20 kDa subunit family.</text>
</comment>
<proteinExistence type="inferred from homology"/>
<protein>
    <recommendedName>
        <fullName evidence="1">NADH-quinone oxidoreductase subunit B</fullName>
        <ecNumber evidence="1">7.1.1.-</ecNumber>
    </recommendedName>
    <alternativeName>
        <fullName evidence="1">NADH dehydrogenase I subunit B</fullName>
    </alternativeName>
    <alternativeName>
        <fullName evidence="1">NDH-1 subunit B</fullName>
    </alternativeName>
</protein>
<name>NUOB_XANE5</name>
<gene>
    <name evidence="1" type="primary">nuoB</name>
    <name type="ordered locus">XCV2852</name>
</gene>
<sequence>MGVIQTLDSLMTNPMPEGRVEDILRPEGENPLLEKGYVTTSVDALLNWARTGSMWPMTFGLACCAVEMMHAGASRLDLDRYGVVFRPSPRQSDVMIVAGTLVNKMAPALRKVYDQMPDPKWVISMGSCANGGGYYHYSYSVVRGCDRIVPVDIYVPGCPPTAEALVYGILQLQKKIWRTQTIAR</sequence>
<dbReference type="EC" id="7.1.1.-" evidence="1"/>
<dbReference type="EMBL" id="AM039952">
    <property type="protein sequence ID" value="CAJ24531.1"/>
    <property type="molecule type" value="Genomic_DNA"/>
</dbReference>
<dbReference type="RefSeq" id="WP_005914280.1">
    <property type="nucleotide sequence ID" value="NZ_CP017190.1"/>
</dbReference>
<dbReference type="SMR" id="Q3BRN0"/>
<dbReference type="STRING" id="456327.BJD11_08610"/>
<dbReference type="KEGG" id="xcv:XCV2852"/>
<dbReference type="eggNOG" id="COG0377">
    <property type="taxonomic scope" value="Bacteria"/>
</dbReference>
<dbReference type="HOGENOM" id="CLU_055737_7_3_6"/>
<dbReference type="Proteomes" id="UP000007069">
    <property type="component" value="Chromosome"/>
</dbReference>
<dbReference type="GO" id="GO:0005886">
    <property type="term" value="C:plasma membrane"/>
    <property type="evidence" value="ECO:0007669"/>
    <property type="project" value="UniProtKB-SubCell"/>
</dbReference>
<dbReference type="GO" id="GO:0045271">
    <property type="term" value="C:respiratory chain complex I"/>
    <property type="evidence" value="ECO:0007669"/>
    <property type="project" value="TreeGrafter"/>
</dbReference>
<dbReference type="GO" id="GO:0051539">
    <property type="term" value="F:4 iron, 4 sulfur cluster binding"/>
    <property type="evidence" value="ECO:0007669"/>
    <property type="project" value="UniProtKB-KW"/>
</dbReference>
<dbReference type="GO" id="GO:0005506">
    <property type="term" value="F:iron ion binding"/>
    <property type="evidence" value="ECO:0007669"/>
    <property type="project" value="UniProtKB-UniRule"/>
</dbReference>
<dbReference type="GO" id="GO:0008137">
    <property type="term" value="F:NADH dehydrogenase (ubiquinone) activity"/>
    <property type="evidence" value="ECO:0007669"/>
    <property type="project" value="InterPro"/>
</dbReference>
<dbReference type="GO" id="GO:0050136">
    <property type="term" value="F:NADH:ubiquinone reductase (non-electrogenic) activity"/>
    <property type="evidence" value="ECO:0007669"/>
    <property type="project" value="UniProtKB-UniRule"/>
</dbReference>
<dbReference type="GO" id="GO:0048038">
    <property type="term" value="F:quinone binding"/>
    <property type="evidence" value="ECO:0007669"/>
    <property type="project" value="UniProtKB-KW"/>
</dbReference>
<dbReference type="GO" id="GO:0009060">
    <property type="term" value="P:aerobic respiration"/>
    <property type="evidence" value="ECO:0007669"/>
    <property type="project" value="TreeGrafter"/>
</dbReference>
<dbReference type="GO" id="GO:0015990">
    <property type="term" value="P:electron transport coupled proton transport"/>
    <property type="evidence" value="ECO:0007669"/>
    <property type="project" value="TreeGrafter"/>
</dbReference>
<dbReference type="FunFam" id="3.40.50.12280:FF:000001">
    <property type="entry name" value="NADH-quinone oxidoreductase subunit B 2"/>
    <property type="match status" value="1"/>
</dbReference>
<dbReference type="Gene3D" id="3.40.50.12280">
    <property type="match status" value="1"/>
</dbReference>
<dbReference type="HAMAP" id="MF_01356">
    <property type="entry name" value="NDH1_NuoB"/>
    <property type="match status" value="1"/>
</dbReference>
<dbReference type="InterPro" id="IPR006137">
    <property type="entry name" value="NADH_UbQ_OxRdtase-like_20kDa"/>
</dbReference>
<dbReference type="InterPro" id="IPR006138">
    <property type="entry name" value="NADH_UQ_OxRdtase_20Kd_su"/>
</dbReference>
<dbReference type="NCBIfam" id="TIGR01957">
    <property type="entry name" value="nuoB_fam"/>
    <property type="match status" value="1"/>
</dbReference>
<dbReference type="NCBIfam" id="NF005012">
    <property type="entry name" value="PRK06411.1"/>
    <property type="match status" value="1"/>
</dbReference>
<dbReference type="PANTHER" id="PTHR11995">
    <property type="entry name" value="NADH DEHYDROGENASE"/>
    <property type="match status" value="1"/>
</dbReference>
<dbReference type="PANTHER" id="PTHR11995:SF14">
    <property type="entry name" value="NADH DEHYDROGENASE [UBIQUINONE] IRON-SULFUR PROTEIN 7, MITOCHONDRIAL"/>
    <property type="match status" value="1"/>
</dbReference>
<dbReference type="Pfam" id="PF01058">
    <property type="entry name" value="Oxidored_q6"/>
    <property type="match status" value="1"/>
</dbReference>
<dbReference type="SUPFAM" id="SSF56770">
    <property type="entry name" value="HydA/Nqo6-like"/>
    <property type="match status" value="1"/>
</dbReference>
<dbReference type="PROSITE" id="PS01150">
    <property type="entry name" value="COMPLEX1_20K"/>
    <property type="match status" value="1"/>
</dbReference>